<accession>A4Y1D3</accession>
<feature type="chain" id="PRO_1000019500" description="Oxygen-dependent coproporphyrinogen-III oxidase">
    <location>
        <begin position="1"/>
        <end position="302"/>
    </location>
</feature>
<feature type="region of interest" description="Important for dimerization" evidence="1">
    <location>
        <begin position="242"/>
        <end position="277"/>
    </location>
</feature>
<feature type="active site" description="Proton donor" evidence="1">
    <location>
        <position position="108"/>
    </location>
</feature>
<feature type="binding site" evidence="1">
    <location>
        <position position="94"/>
    </location>
    <ligand>
        <name>substrate</name>
    </ligand>
</feature>
<feature type="binding site" evidence="1">
    <location>
        <position position="98"/>
    </location>
    <ligand>
        <name>a divalent metal cation</name>
        <dbReference type="ChEBI" id="CHEBI:60240"/>
    </ligand>
</feature>
<feature type="binding site" evidence="1">
    <location>
        <position position="108"/>
    </location>
    <ligand>
        <name>a divalent metal cation</name>
        <dbReference type="ChEBI" id="CHEBI:60240"/>
    </ligand>
</feature>
<feature type="binding site" evidence="1">
    <location>
        <begin position="110"/>
        <end position="112"/>
    </location>
    <ligand>
        <name>substrate</name>
    </ligand>
</feature>
<feature type="binding site" evidence="1">
    <location>
        <position position="147"/>
    </location>
    <ligand>
        <name>a divalent metal cation</name>
        <dbReference type="ChEBI" id="CHEBI:60240"/>
    </ligand>
</feature>
<feature type="binding site" evidence="1">
    <location>
        <position position="177"/>
    </location>
    <ligand>
        <name>a divalent metal cation</name>
        <dbReference type="ChEBI" id="CHEBI:60240"/>
    </ligand>
</feature>
<feature type="binding site" evidence="1">
    <location>
        <begin position="260"/>
        <end position="262"/>
    </location>
    <ligand>
        <name>substrate</name>
    </ligand>
</feature>
<feature type="site" description="Important for dimerization" evidence="1">
    <location>
        <position position="177"/>
    </location>
</feature>
<keyword id="KW-0963">Cytoplasm</keyword>
<keyword id="KW-0350">Heme biosynthesis</keyword>
<keyword id="KW-0479">Metal-binding</keyword>
<keyword id="KW-0560">Oxidoreductase</keyword>
<keyword id="KW-0627">Porphyrin biosynthesis</keyword>
<comment type="function">
    <text evidence="1">Involved in the heme biosynthesis. Catalyzes the aerobic oxidative decarboxylation of propionate groups of rings A and B of coproporphyrinogen-III to yield the vinyl groups in protoporphyrinogen-IX.</text>
</comment>
<comment type="catalytic activity">
    <reaction evidence="1">
        <text>coproporphyrinogen III + O2 + 2 H(+) = protoporphyrinogen IX + 2 CO2 + 2 H2O</text>
        <dbReference type="Rhea" id="RHEA:18257"/>
        <dbReference type="ChEBI" id="CHEBI:15377"/>
        <dbReference type="ChEBI" id="CHEBI:15378"/>
        <dbReference type="ChEBI" id="CHEBI:15379"/>
        <dbReference type="ChEBI" id="CHEBI:16526"/>
        <dbReference type="ChEBI" id="CHEBI:57307"/>
        <dbReference type="ChEBI" id="CHEBI:57309"/>
        <dbReference type="EC" id="1.3.3.3"/>
    </reaction>
</comment>
<comment type="cofactor">
    <cofactor evidence="1">
        <name>a divalent metal cation</name>
        <dbReference type="ChEBI" id="CHEBI:60240"/>
    </cofactor>
</comment>
<comment type="pathway">
    <text evidence="1">Porphyrin-containing compound metabolism; protoporphyrin-IX biosynthesis; protoporphyrinogen-IX from coproporphyrinogen-III (O2 route): step 1/1.</text>
</comment>
<comment type="subunit">
    <text evidence="1">Homodimer.</text>
</comment>
<comment type="subcellular location">
    <subcellularLocation>
        <location evidence="1">Cytoplasm</location>
    </subcellularLocation>
</comment>
<comment type="similarity">
    <text evidence="1">Belongs to the aerobic coproporphyrinogen-III oxidase family.</text>
</comment>
<sequence length="302" mass="34085">MSVPDVAVVKAFLIDLQNRICAGLQALDGQATFAADSWTRAEGGGGTSRVLTQGAVFEQAGVNFSHVTGAAMPASATAHRPELAGRSFEAMGVSLVIHPNNPYIPTTHANVRFFIAQKEGADPVWWFGGGFDLTPYYPFEEDVREWHQTSKDICAPFGDEVYPKYKKWCDEYFFLPHRNETRGVGGLFFDDLNQDGFEQSFSFMQAVGNGFLTAYAPIVERRKETEFGERERQFQLYRRGRYVEFNLVYDRGTLFGLQTGGRTESILMSMPPLVRWQYAYTPEAGSPEADLYDNYLKPRDWV</sequence>
<name>HEM6_SHEPC</name>
<proteinExistence type="inferred from homology"/>
<gene>
    <name evidence="1" type="primary">hemF</name>
    <name type="ordered locus">Sputcn32_0030</name>
</gene>
<reference key="1">
    <citation type="submission" date="2007-04" db="EMBL/GenBank/DDBJ databases">
        <title>Complete sequence of Shewanella putrefaciens CN-32.</title>
        <authorList>
            <consortium name="US DOE Joint Genome Institute"/>
            <person name="Copeland A."/>
            <person name="Lucas S."/>
            <person name="Lapidus A."/>
            <person name="Barry K."/>
            <person name="Detter J.C."/>
            <person name="Glavina del Rio T."/>
            <person name="Hammon N."/>
            <person name="Israni S."/>
            <person name="Dalin E."/>
            <person name="Tice H."/>
            <person name="Pitluck S."/>
            <person name="Chain P."/>
            <person name="Malfatti S."/>
            <person name="Shin M."/>
            <person name="Vergez L."/>
            <person name="Schmutz J."/>
            <person name="Larimer F."/>
            <person name="Land M."/>
            <person name="Hauser L."/>
            <person name="Kyrpides N."/>
            <person name="Mikhailova N."/>
            <person name="Romine M.F."/>
            <person name="Fredrickson J."/>
            <person name="Tiedje J."/>
            <person name="Richardson P."/>
        </authorList>
    </citation>
    <scope>NUCLEOTIDE SEQUENCE [LARGE SCALE GENOMIC DNA]</scope>
    <source>
        <strain>CN-32 / ATCC BAA-453</strain>
    </source>
</reference>
<dbReference type="EC" id="1.3.3.3" evidence="1"/>
<dbReference type="EMBL" id="CP000681">
    <property type="protein sequence ID" value="ABP73766.1"/>
    <property type="molecule type" value="Genomic_DNA"/>
</dbReference>
<dbReference type="SMR" id="A4Y1D3"/>
<dbReference type="STRING" id="319224.Sputcn32_0030"/>
<dbReference type="KEGG" id="spc:Sputcn32_0030"/>
<dbReference type="eggNOG" id="COG0408">
    <property type="taxonomic scope" value="Bacteria"/>
</dbReference>
<dbReference type="HOGENOM" id="CLU_026169_0_1_6"/>
<dbReference type="UniPathway" id="UPA00251">
    <property type="reaction ID" value="UER00322"/>
</dbReference>
<dbReference type="GO" id="GO:0005737">
    <property type="term" value="C:cytoplasm"/>
    <property type="evidence" value="ECO:0007669"/>
    <property type="project" value="UniProtKB-SubCell"/>
</dbReference>
<dbReference type="GO" id="GO:0004109">
    <property type="term" value="F:coproporphyrinogen oxidase activity"/>
    <property type="evidence" value="ECO:0007669"/>
    <property type="project" value="UniProtKB-UniRule"/>
</dbReference>
<dbReference type="GO" id="GO:0046872">
    <property type="term" value="F:metal ion binding"/>
    <property type="evidence" value="ECO:0007669"/>
    <property type="project" value="UniProtKB-KW"/>
</dbReference>
<dbReference type="GO" id="GO:0042803">
    <property type="term" value="F:protein homodimerization activity"/>
    <property type="evidence" value="ECO:0000250"/>
    <property type="project" value="UniProtKB"/>
</dbReference>
<dbReference type="GO" id="GO:0006782">
    <property type="term" value="P:protoporphyrinogen IX biosynthetic process"/>
    <property type="evidence" value="ECO:0007669"/>
    <property type="project" value="UniProtKB-UniRule"/>
</dbReference>
<dbReference type="FunFam" id="3.40.1500.10:FF:000001">
    <property type="entry name" value="Oxygen-dependent coproporphyrinogen-III oxidase"/>
    <property type="match status" value="1"/>
</dbReference>
<dbReference type="Gene3D" id="3.40.1500.10">
    <property type="entry name" value="Coproporphyrinogen III oxidase, aerobic"/>
    <property type="match status" value="1"/>
</dbReference>
<dbReference type="HAMAP" id="MF_00333">
    <property type="entry name" value="Coprogen_oxidas"/>
    <property type="match status" value="1"/>
</dbReference>
<dbReference type="InterPro" id="IPR001260">
    <property type="entry name" value="Coprogen_oxidase_aer"/>
</dbReference>
<dbReference type="InterPro" id="IPR036406">
    <property type="entry name" value="Coprogen_oxidase_aer_sf"/>
</dbReference>
<dbReference type="InterPro" id="IPR018375">
    <property type="entry name" value="Coprogen_oxidase_CS"/>
</dbReference>
<dbReference type="NCBIfam" id="NF003727">
    <property type="entry name" value="PRK05330.1"/>
    <property type="match status" value="1"/>
</dbReference>
<dbReference type="PANTHER" id="PTHR10755">
    <property type="entry name" value="COPROPORPHYRINOGEN III OXIDASE, MITOCHONDRIAL"/>
    <property type="match status" value="1"/>
</dbReference>
<dbReference type="PANTHER" id="PTHR10755:SF0">
    <property type="entry name" value="OXYGEN-DEPENDENT COPROPORPHYRINOGEN-III OXIDASE, MITOCHONDRIAL"/>
    <property type="match status" value="1"/>
</dbReference>
<dbReference type="Pfam" id="PF01218">
    <property type="entry name" value="Coprogen_oxidas"/>
    <property type="match status" value="1"/>
</dbReference>
<dbReference type="PIRSF" id="PIRSF000166">
    <property type="entry name" value="Coproporphyri_ox"/>
    <property type="match status" value="1"/>
</dbReference>
<dbReference type="PRINTS" id="PR00073">
    <property type="entry name" value="COPRGNOXDASE"/>
</dbReference>
<dbReference type="SUPFAM" id="SSF102886">
    <property type="entry name" value="Coproporphyrinogen III oxidase"/>
    <property type="match status" value="1"/>
</dbReference>
<dbReference type="PROSITE" id="PS01021">
    <property type="entry name" value="COPROGEN_OXIDASE"/>
    <property type="match status" value="1"/>
</dbReference>
<protein>
    <recommendedName>
        <fullName evidence="1">Oxygen-dependent coproporphyrinogen-III oxidase</fullName>
        <shortName evidence="1">CPO</shortName>
        <shortName evidence="1">Coprogen oxidase</shortName>
        <shortName evidence="1">Coproporphyrinogenase</shortName>
        <ecNumber evidence="1">1.3.3.3</ecNumber>
    </recommendedName>
</protein>
<organism>
    <name type="scientific">Shewanella putrefaciens (strain CN-32 / ATCC BAA-453)</name>
    <dbReference type="NCBI Taxonomy" id="319224"/>
    <lineage>
        <taxon>Bacteria</taxon>
        <taxon>Pseudomonadati</taxon>
        <taxon>Pseudomonadota</taxon>
        <taxon>Gammaproteobacteria</taxon>
        <taxon>Alteromonadales</taxon>
        <taxon>Shewanellaceae</taxon>
        <taxon>Shewanella</taxon>
    </lineage>
</organism>
<evidence type="ECO:0000255" key="1">
    <source>
        <dbReference type="HAMAP-Rule" id="MF_00333"/>
    </source>
</evidence>